<evidence type="ECO:0000255" key="1">
    <source>
        <dbReference type="HAMAP-Rule" id="MF_01247"/>
    </source>
</evidence>
<dbReference type="EMBL" id="CP001048">
    <property type="protein sequence ID" value="ACC90921.1"/>
    <property type="molecule type" value="Genomic_DNA"/>
</dbReference>
<dbReference type="RefSeq" id="WP_002208926.1">
    <property type="nucleotide sequence ID" value="NZ_CP009780.1"/>
</dbReference>
<dbReference type="SMR" id="B2K5W2"/>
<dbReference type="GeneID" id="57974475"/>
<dbReference type="KEGG" id="ypb:YPTS_3972"/>
<dbReference type="PATRIC" id="fig|502801.10.peg.3437"/>
<dbReference type="GO" id="GO:0005524">
    <property type="term" value="F:ATP binding"/>
    <property type="evidence" value="ECO:0007669"/>
    <property type="project" value="UniProtKB-UniRule"/>
</dbReference>
<dbReference type="GO" id="GO:0003677">
    <property type="term" value="F:DNA binding"/>
    <property type="evidence" value="ECO:0007669"/>
    <property type="project" value="UniProtKB-KW"/>
</dbReference>
<dbReference type="GO" id="GO:0003700">
    <property type="term" value="F:DNA-binding transcription factor activity"/>
    <property type="evidence" value="ECO:0007669"/>
    <property type="project" value="UniProtKB-UniRule"/>
</dbReference>
<dbReference type="GO" id="GO:0045913">
    <property type="term" value="P:positive regulation of carbohydrate metabolic process"/>
    <property type="evidence" value="ECO:0007669"/>
    <property type="project" value="UniProtKB-UniRule"/>
</dbReference>
<dbReference type="GO" id="GO:0045893">
    <property type="term" value="P:positive regulation of DNA-templated transcription"/>
    <property type="evidence" value="ECO:0007669"/>
    <property type="project" value="UniProtKB-UniRule"/>
</dbReference>
<dbReference type="CDD" id="cd06170">
    <property type="entry name" value="LuxR_C_like"/>
    <property type="match status" value="1"/>
</dbReference>
<dbReference type="FunFam" id="1.10.10.10:FF:000115">
    <property type="entry name" value="HTH-type transcriptional regulator MalT"/>
    <property type="match status" value="1"/>
</dbReference>
<dbReference type="Gene3D" id="1.25.40.10">
    <property type="entry name" value="Tetratricopeptide repeat domain"/>
    <property type="match status" value="1"/>
</dbReference>
<dbReference type="Gene3D" id="1.10.10.10">
    <property type="entry name" value="Winged helix-like DNA-binding domain superfamily/Winged helix DNA-binding domain"/>
    <property type="match status" value="1"/>
</dbReference>
<dbReference type="HAMAP" id="MF_01247">
    <property type="entry name" value="HTH_type_MalT"/>
    <property type="match status" value="1"/>
</dbReference>
<dbReference type="InterPro" id="IPR027417">
    <property type="entry name" value="P-loop_NTPase"/>
</dbReference>
<dbReference type="InterPro" id="IPR016032">
    <property type="entry name" value="Sig_transdc_resp-reg_C-effctor"/>
</dbReference>
<dbReference type="InterPro" id="IPR011990">
    <property type="entry name" value="TPR-like_helical_dom_sf"/>
</dbReference>
<dbReference type="InterPro" id="IPR041617">
    <property type="entry name" value="TPR_MalT"/>
</dbReference>
<dbReference type="InterPro" id="IPR023768">
    <property type="entry name" value="Tscrpt_reg_HTH_MalT"/>
</dbReference>
<dbReference type="InterPro" id="IPR000792">
    <property type="entry name" value="Tscrpt_reg_LuxR_C"/>
</dbReference>
<dbReference type="InterPro" id="IPR036388">
    <property type="entry name" value="WH-like_DNA-bd_sf"/>
</dbReference>
<dbReference type="NCBIfam" id="NF003420">
    <property type="entry name" value="PRK04841.1"/>
    <property type="match status" value="1"/>
</dbReference>
<dbReference type="PANTHER" id="PTHR44688">
    <property type="entry name" value="DNA-BINDING TRANSCRIPTIONAL ACTIVATOR DEVR_DOSR"/>
    <property type="match status" value="1"/>
</dbReference>
<dbReference type="PANTHER" id="PTHR44688:SF16">
    <property type="entry name" value="DNA-BINDING TRANSCRIPTIONAL ACTIVATOR DEVR_DOSR"/>
    <property type="match status" value="1"/>
</dbReference>
<dbReference type="Pfam" id="PF00196">
    <property type="entry name" value="GerE"/>
    <property type="match status" value="1"/>
</dbReference>
<dbReference type="Pfam" id="PF17874">
    <property type="entry name" value="TPR_MalT"/>
    <property type="match status" value="1"/>
</dbReference>
<dbReference type="PRINTS" id="PR00038">
    <property type="entry name" value="HTHLUXR"/>
</dbReference>
<dbReference type="SMART" id="SM00421">
    <property type="entry name" value="HTH_LUXR"/>
    <property type="match status" value="1"/>
</dbReference>
<dbReference type="SUPFAM" id="SSF46894">
    <property type="entry name" value="C-terminal effector domain of the bipartite response regulators"/>
    <property type="match status" value="1"/>
</dbReference>
<dbReference type="SUPFAM" id="SSF52540">
    <property type="entry name" value="P-loop containing nucleoside triphosphate hydrolases"/>
    <property type="match status" value="1"/>
</dbReference>
<dbReference type="SUPFAM" id="SSF48452">
    <property type="entry name" value="TPR-like"/>
    <property type="match status" value="1"/>
</dbReference>
<dbReference type="PROSITE" id="PS00622">
    <property type="entry name" value="HTH_LUXR_1"/>
    <property type="match status" value="1"/>
</dbReference>
<dbReference type="PROSITE" id="PS50043">
    <property type="entry name" value="HTH_LUXR_2"/>
    <property type="match status" value="1"/>
</dbReference>
<reference key="1">
    <citation type="submission" date="2008-04" db="EMBL/GenBank/DDBJ databases">
        <title>Complete sequence of Yersinia pseudotuberculosis PB1/+.</title>
        <authorList>
            <person name="Copeland A."/>
            <person name="Lucas S."/>
            <person name="Lapidus A."/>
            <person name="Glavina del Rio T."/>
            <person name="Dalin E."/>
            <person name="Tice H."/>
            <person name="Bruce D."/>
            <person name="Goodwin L."/>
            <person name="Pitluck S."/>
            <person name="Munk A.C."/>
            <person name="Brettin T."/>
            <person name="Detter J.C."/>
            <person name="Han C."/>
            <person name="Tapia R."/>
            <person name="Schmutz J."/>
            <person name="Larimer F."/>
            <person name="Land M."/>
            <person name="Hauser L."/>
            <person name="Challacombe J.F."/>
            <person name="Green L."/>
            <person name="Lindler L.E."/>
            <person name="Nikolich M.P."/>
            <person name="Richardson P."/>
        </authorList>
    </citation>
    <scope>NUCLEOTIDE SEQUENCE [LARGE SCALE GENOMIC DNA]</scope>
    <source>
        <strain>PB1/+</strain>
    </source>
</reference>
<protein>
    <recommendedName>
        <fullName evidence="1">HTH-type transcriptional regulator MalT</fullName>
    </recommendedName>
    <alternativeName>
        <fullName evidence="1">ATP-dependent transcriptional activator MalT</fullName>
    </alternativeName>
</protein>
<keyword id="KW-0010">Activator</keyword>
<keyword id="KW-0067">ATP-binding</keyword>
<keyword id="KW-0119">Carbohydrate metabolism</keyword>
<keyword id="KW-0238">DNA-binding</keyword>
<keyword id="KW-0547">Nucleotide-binding</keyword>
<keyword id="KW-0804">Transcription</keyword>
<keyword id="KW-0805">Transcription regulation</keyword>
<proteinExistence type="inferred from homology"/>
<comment type="function">
    <text evidence="1">Positively regulates the transcription of the maltose regulon whose gene products are responsible for uptake and catabolism of malto-oligosaccharides. Specifically binds to the promoter region of its target genes, recognizing a short DNA motif called the MalT box.</text>
</comment>
<comment type="activity regulation">
    <text evidence="1">Activated by ATP and maltotriose, which are both required for DNA binding.</text>
</comment>
<comment type="subunit">
    <text evidence="1">Monomer in solution. Oligomerizes to an active state in the presence of the positive effectors ATP and maltotriose.</text>
</comment>
<comment type="similarity">
    <text evidence="1">Belongs to the MalT family.</text>
</comment>
<feature type="chain" id="PRO_1000139861" description="HTH-type transcriptional regulator MalT">
    <location>
        <begin position="1"/>
        <end position="903"/>
    </location>
</feature>
<feature type="domain" description="HTH luxR-type" evidence="1">
    <location>
        <begin position="832"/>
        <end position="897"/>
    </location>
</feature>
<feature type="DNA-binding region" description="H-T-H motif" evidence="1">
    <location>
        <begin position="856"/>
        <end position="875"/>
    </location>
</feature>
<feature type="binding site" evidence="1">
    <location>
        <begin position="39"/>
        <end position="46"/>
    </location>
    <ligand>
        <name>ATP</name>
        <dbReference type="ChEBI" id="CHEBI:30616"/>
    </ligand>
</feature>
<sequence>MLIPSKLSRPVRLQNTVVRDRLLVKLSSAANYRLTLINCPAGYGKTTLIAQWAADQSNLGWYSLDESDNQSERFATYLIAAIQLATGGHCSKSEALSQKHQYANLSALFSQLFIELSNWDGPLYLVIDDYHLITNDAIHEAMRFFLRHQPENLTLIILSRTLPSLGIANLRVRDQLLELGMQQLAFNHHEAQQFFECRLSSPLEQGDSSRLCDEVEGWVTALQLIALSSRQPNSSAQKSAKRLAGLNASHLSDYLVDEVLDQVDSKARAFLLRCSVLRSMNDALIVRLTGEDNGQQLLEELERQGLFIHRMDDSAEWFCFHPLFATFLRQRCQWELALELPELHHAAAEGWMALGYPAEAIHHALAAGDVGMLRDILLQHAWSLFHHSELALLEQCLTALPYPLLVQNPELALLQAWLAQSQHRYSEVNTLLEQAELAMQERKIPVDEILRAEFGALRAQVAINAGKPDEAEKLATDALKYLPMAHYYSRIVATSVTGEVHHCKGELARALPMMQQTEQMARRHEAYHYALWALLQQSEILIAQGFLQAAYETQEKAFELIREQHLEQLPMHEFLLRIRSQVLWSWSRLDEAEEAARKGVEILANYQPQQQLQCLAMLAKCSLARGDLDNANVYIQRCEALQHGSQYHLDWITNADKPRVIHWQMTGDKVAAASWLRQTEKPGMADNHFLQGQWRNIARVQIILGRFDEAEVVLDELNENARRLRLTSDLNRNLLLSNTLYWQTERKGEAQKALIESLTLANRTGFISHFVIEGEAMAQQLRQLIQLNALPELEQHRAQRILKDINQHHRHKFAHFDEIFVDKLLTHPQVPELIRTSPLTQREWQVLGLIYSGYSNDQIANELDVAATTIKTHIRNLYQKLGVAHRQEAVQQAQRLLQMMGYV</sequence>
<gene>
    <name evidence="1" type="primary">malT</name>
    <name type="ordered locus">YPTS_3972</name>
</gene>
<name>MALT_YERPB</name>
<accession>B2K5W2</accession>
<organism>
    <name type="scientific">Yersinia pseudotuberculosis serotype IB (strain PB1/+)</name>
    <dbReference type="NCBI Taxonomy" id="502801"/>
    <lineage>
        <taxon>Bacteria</taxon>
        <taxon>Pseudomonadati</taxon>
        <taxon>Pseudomonadota</taxon>
        <taxon>Gammaproteobacteria</taxon>
        <taxon>Enterobacterales</taxon>
        <taxon>Yersiniaceae</taxon>
        <taxon>Yersinia</taxon>
    </lineage>
</organism>